<keyword id="KW-0997">Cell inner membrane</keyword>
<keyword id="KW-1003">Cell membrane</keyword>
<keyword id="KW-0472">Membrane</keyword>
<keyword id="KW-0812">Transmembrane</keyword>
<keyword id="KW-1133">Transmembrane helix</keyword>
<evidence type="ECO:0000255" key="1">
    <source>
        <dbReference type="HAMAP-Rule" id="MF_01067"/>
    </source>
</evidence>
<dbReference type="EMBL" id="CP001048">
    <property type="protein sequence ID" value="ACC89154.1"/>
    <property type="molecule type" value="Genomic_DNA"/>
</dbReference>
<dbReference type="RefSeq" id="WP_002210639.1">
    <property type="nucleotide sequence ID" value="NZ_CP009780.1"/>
</dbReference>
<dbReference type="KEGG" id="ypb:YPTS_2193"/>
<dbReference type="PATRIC" id="fig|502801.10.peg.1580"/>
<dbReference type="GO" id="GO:0005886">
    <property type="term" value="C:plasma membrane"/>
    <property type="evidence" value="ECO:0007669"/>
    <property type="project" value="UniProtKB-SubCell"/>
</dbReference>
<dbReference type="HAMAP" id="MF_01067">
    <property type="entry name" value="UPF0259"/>
    <property type="match status" value="1"/>
</dbReference>
<dbReference type="InterPro" id="IPR009627">
    <property type="entry name" value="UPF0259"/>
</dbReference>
<dbReference type="NCBIfam" id="NF002774">
    <property type="entry name" value="PRK02868.1"/>
    <property type="match status" value="1"/>
</dbReference>
<dbReference type="Pfam" id="PF06790">
    <property type="entry name" value="UPF0259"/>
    <property type="match status" value="1"/>
</dbReference>
<proteinExistence type="inferred from homology"/>
<comment type="subcellular location">
    <subcellularLocation>
        <location evidence="1">Cell inner membrane</location>
        <topology evidence="1">Multi-pass membrane protein</topology>
    </subcellularLocation>
</comment>
<comment type="similarity">
    <text evidence="1">Belongs to the UPF0259 family.</text>
</comment>
<reference key="1">
    <citation type="submission" date="2008-04" db="EMBL/GenBank/DDBJ databases">
        <title>Complete sequence of Yersinia pseudotuberculosis PB1/+.</title>
        <authorList>
            <person name="Copeland A."/>
            <person name="Lucas S."/>
            <person name="Lapidus A."/>
            <person name="Glavina del Rio T."/>
            <person name="Dalin E."/>
            <person name="Tice H."/>
            <person name="Bruce D."/>
            <person name="Goodwin L."/>
            <person name="Pitluck S."/>
            <person name="Munk A.C."/>
            <person name="Brettin T."/>
            <person name="Detter J.C."/>
            <person name="Han C."/>
            <person name="Tapia R."/>
            <person name="Schmutz J."/>
            <person name="Larimer F."/>
            <person name="Land M."/>
            <person name="Hauser L."/>
            <person name="Challacombe J.F."/>
            <person name="Green L."/>
            <person name="Lindler L.E."/>
            <person name="Nikolich M.P."/>
            <person name="Richardson P."/>
        </authorList>
    </citation>
    <scope>NUCLEOTIDE SEQUENCE [LARGE SCALE GENOMIC DNA]</scope>
    <source>
        <strain>PB1/+</strain>
    </source>
</reference>
<organism>
    <name type="scientific">Yersinia pseudotuberculosis serotype IB (strain PB1/+)</name>
    <dbReference type="NCBI Taxonomy" id="502801"/>
    <lineage>
        <taxon>Bacteria</taxon>
        <taxon>Pseudomonadati</taxon>
        <taxon>Pseudomonadota</taxon>
        <taxon>Gammaproteobacteria</taxon>
        <taxon>Enterobacterales</taxon>
        <taxon>Yersiniaceae</taxon>
        <taxon>Yersinia</taxon>
    </lineage>
</organism>
<accession>B2K3V8</accession>
<feature type="chain" id="PRO_1000136596" description="UPF0259 membrane protein YPTS_2193">
    <location>
        <begin position="1"/>
        <end position="256"/>
    </location>
</feature>
<feature type="transmembrane region" description="Helical" evidence="1">
    <location>
        <begin position="20"/>
        <end position="40"/>
    </location>
</feature>
<feature type="transmembrane region" description="Helical" evidence="1">
    <location>
        <begin position="90"/>
        <end position="110"/>
    </location>
</feature>
<feature type="transmembrane region" description="Helical" evidence="1">
    <location>
        <begin position="118"/>
        <end position="138"/>
    </location>
</feature>
<feature type="transmembrane region" description="Helical" evidence="1">
    <location>
        <begin position="141"/>
        <end position="161"/>
    </location>
</feature>
<feature type="transmembrane region" description="Helical" evidence="1">
    <location>
        <begin position="192"/>
        <end position="212"/>
    </location>
</feature>
<feature type="transmembrane region" description="Helical" evidence="1">
    <location>
        <begin position="221"/>
        <end position="241"/>
    </location>
</feature>
<protein>
    <recommendedName>
        <fullName evidence="1">UPF0259 membrane protein YPTS_2193</fullName>
    </recommendedName>
</protein>
<name>Y2193_YERPB</name>
<gene>
    <name type="ordered locus">YPTS_2193</name>
</gene>
<sequence length="256" mass="27754">MPITANTLYRDSFNFLRNQIAAILLLALLTAFITVMLNQTFMPASEQLSILSIPENDITSSGNLSISEIVSQMTPEQQMVLLRVSAVATFSALVGNVLLVGGLLTLIAMVSQGRRVSALQAIGLSLPILPRLLVLMFISTLVIQLGLTFFIVPGVAIAIALSLSPIIVTNERMGIFAAMKASAQLAFANVRLIVPAMMLWIAVKLLLLFLISRFTVLPPTIATIVLSTLSNLASALLLVYLFRLYMLLRPVSLDKQ</sequence>